<reference key="1">
    <citation type="journal article" date="1997" name="Proc. Natl. Acad. Sci. U.S.A.">
        <title>Sequence of a 189-kb segment of the chromosome of Rhodobacter capsulatus SB1003.</title>
        <authorList>
            <person name="Vlcek C."/>
            <person name="Paces V."/>
            <person name="Maltsev N."/>
            <person name="Paces J."/>
            <person name="Haselkorn R."/>
            <person name="Fonstein M."/>
        </authorList>
    </citation>
    <scope>NUCLEOTIDE SEQUENCE [GENOMIC DNA]</scope>
    <source>
        <strain>ATCC BAA-309 / NBRC 16581 / SB1003</strain>
    </source>
</reference>
<reference key="2">
    <citation type="journal article" date="2010" name="J. Bacteriol.">
        <title>Complete genome sequence of the photosynthetic purple nonsulfur bacterium Rhodobacter capsulatus SB 1003.</title>
        <authorList>
            <person name="Strnad H."/>
            <person name="Lapidus A."/>
            <person name="Paces J."/>
            <person name="Ulbrich P."/>
            <person name="Vlcek C."/>
            <person name="Paces V."/>
            <person name="Haselkorn R."/>
        </authorList>
    </citation>
    <scope>NUCLEOTIDE SEQUENCE [LARGE SCALE GENOMIC DNA]</scope>
    <source>
        <strain>ATCC BAA-309 / NBRC 16581 / SB1003</strain>
    </source>
</reference>
<name>Y2142_RHOCB</name>
<accession>O68025</accession>
<accession>D5AV90</accession>
<sequence>MITQKMKYALKALLELADEARRDSPQALTIEEIATRSGTPKRFLEHILLDLRKAGVVASIRGRSGGYSLLKAPRDVSISELVRRIDGPIAPLPCLSRSAYQPCDDCHDEAACRIRKVFAEVFWSYLVLIDSLTLEDMLAAGNPAAKLLED</sequence>
<evidence type="ECO:0000255" key="1">
    <source>
        <dbReference type="PROSITE-ProRule" id="PRU00540"/>
    </source>
</evidence>
<proteinExistence type="predicted"/>
<organism>
    <name type="scientific">Rhodobacter capsulatus (strain ATCC BAA-309 / NBRC 16581 / SB1003)</name>
    <dbReference type="NCBI Taxonomy" id="272942"/>
    <lineage>
        <taxon>Bacteria</taxon>
        <taxon>Pseudomonadati</taxon>
        <taxon>Pseudomonadota</taxon>
        <taxon>Alphaproteobacteria</taxon>
        <taxon>Rhodobacterales</taxon>
        <taxon>Rhodobacter group</taxon>
        <taxon>Rhodobacter</taxon>
    </lineage>
</organism>
<keyword id="KW-0238">DNA-binding</keyword>
<keyword id="KW-1185">Reference proteome</keyword>
<dbReference type="EMBL" id="AF010496">
    <property type="protein sequence ID" value="AAC16111.1"/>
    <property type="molecule type" value="Genomic_DNA"/>
</dbReference>
<dbReference type="EMBL" id="CP001312">
    <property type="protein sequence ID" value="ADE85872.1"/>
    <property type="molecule type" value="Genomic_DNA"/>
</dbReference>
<dbReference type="PIR" id="T03458">
    <property type="entry name" value="T03458"/>
</dbReference>
<dbReference type="RefSeq" id="WP_013067851.1">
    <property type="nucleotide sequence ID" value="NC_014034.1"/>
</dbReference>
<dbReference type="SMR" id="O68025"/>
<dbReference type="STRING" id="272942.RCAP_rcc02142"/>
<dbReference type="GeneID" id="31490992"/>
<dbReference type="KEGG" id="rcp:RCAP_rcc02142"/>
<dbReference type="eggNOG" id="COG1959">
    <property type="taxonomic scope" value="Bacteria"/>
</dbReference>
<dbReference type="HOGENOM" id="CLU_107144_1_1_5"/>
<dbReference type="OrthoDB" id="9802344at2"/>
<dbReference type="Proteomes" id="UP000002361">
    <property type="component" value="Chromosome"/>
</dbReference>
<dbReference type="GO" id="GO:0005829">
    <property type="term" value="C:cytosol"/>
    <property type="evidence" value="ECO:0007669"/>
    <property type="project" value="TreeGrafter"/>
</dbReference>
<dbReference type="GO" id="GO:0003677">
    <property type="term" value="F:DNA binding"/>
    <property type="evidence" value="ECO:0007669"/>
    <property type="project" value="UniProtKB-KW"/>
</dbReference>
<dbReference type="GO" id="GO:0003700">
    <property type="term" value="F:DNA-binding transcription factor activity"/>
    <property type="evidence" value="ECO:0007669"/>
    <property type="project" value="TreeGrafter"/>
</dbReference>
<dbReference type="Gene3D" id="1.10.10.10">
    <property type="entry name" value="Winged helix-like DNA-binding domain superfamily/Winged helix DNA-binding domain"/>
    <property type="match status" value="1"/>
</dbReference>
<dbReference type="InterPro" id="IPR030489">
    <property type="entry name" value="TR_Rrf2-type_CS"/>
</dbReference>
<dbReference type="InterPro" id="IPR000944">
    <property type="entry name" value="Tscrpt_reg_Rrf2"/>
</dbReference>
<dbReference type="InterPro" id="IPR036388">
    <property type="entry name" value="WH-like_DNA-bd_sf"/>
</dbReference>
<dbReference type="InterPro" id="IPR036390">
    <property type="entry name" value="WH_DNA-bd_sf"/>
</dbReference>
<dbReference type="NCBIfam" id="TIGR00738">
    <property type="entry name" value="rrf2_super"/>
    <property type="match status" value="1"/>
</dbReference>
<dbReference type="PANTHER" id="PTHR33221:SF5">
    <property type="entry name" value="HTH-TYPE TRANSCRIPTIONAL REGULATOR ISCR"/>
    <property type="match status" value="1"/>
</dbReference>
<dbReference type="PANTHER" id="PTHR33221">
    <property type="entry name" value="WINGED HELIX-TURN-HELIX TRANSCRIPTIONAL REGULATOR, RRF2 FAMILY"/>
    <property type="match status" value="1"/>
</dbReference>
<dbReference type="Pfam" id="PF02082">
    <property type="entry name" value="Rrf2"/>
    <property type="match status" value="1"/>
</dbReference>
<dbReference type="SUPFAM" id="SSF46785">
    <property type="entry name" value="Winged helix' DNA-binding domain"/>
    <property type="match status" value="1"/>
</dbReference>
<dbReference type="PROSITE" id="PS01332">
    <property type="entry name" value="HTH_RRF2_1"/>
    <property type="match status" value="1"/>
</dbReference>
<dbReference type="PROSITE" id="PS51197">
    <property type="entry name" value="HTH_RRF2_2"/>
    <property type="match status" value="1"/>
</dbReference>
<protein>
    <recommendedName>
        <fullName>Putative HTH-type transcriptional regulator rrf2-like</fullName>
    </recommendedName>
</protein>
<feature type="chain" id="PRO_0000109571" description="Putative HTH-type transcriptional regulator rrf2-like">
    <location>
        <begin position="1"/>
        <end position="150"/>
    </location>
</feature>
<feature type="domain" description="HTH rrf2-type" evidence="1">
    <location>
        <begin position="1"/>
        <end position="139"/>
    </location>
</feature>
<gene>
    <name type="ordered locus">RCAP_rcc02142</name>
</gene>